<accession>Q2YDU3</accession>
<proteinExistence type="evidence at protein level"/>
<evidence type="ECO:0000250" key="1"/>
<evidence type="ECO:0000250" key="2">
    <source>
        <dbReference type="UniProtKB" id="Q96G74"/>
    </source>
</evidence>
<evidence type="ECO:0000255" key="3"/>
<evidence type="ECO:0000255" key="4">
    <source>
        <dbReference type="PROSITE-ProRule" id="PRU00139"/>
    </source>
</evidence>
<evidence type="ECO:0000256" key="5">
    <source>
        <dbReference type="SAM" id="MobiDB-lite"/>
    </source>
</evidence>
<evidence type="ECO:0000303" key="6">
    <source>
    </source>
</evidence>
<evidence type="ECO:0000305" key="7"/>
<evidence type="ECO:0000312" key="8">
    <source>
        <dbReference type="RGD" id="1563027"/>
    </source>
</evidence>
<evidence type="ECO:0007744" key="9">
    <source>
    </source>
</evidence>
<reference key="1">
    <citation type="journal article" date="2004" name="Nature">
        <title>Genome sequence of the Brown Norway rat yields insights into mammalian evolution.</title>
        <authorList>
            <person name="Gibbs R.A."/>
            <person name="Weinstock G.M."/>
            <person name="Metzker M.L."/>
            <person name="Muzny D.M."/>
            <person name="Sodergren E.J."/>
            <person name="Scherer S."/>
            <person name="Scott G."/>
            <person name="Steffen D."/>
            <person name="Worley K.C."/>
            <person name="Burch P.E."/>
            <person name="Okwuonu G."/>
            <person name="Hines S."/>
            <person name="Lewis L."/>
            <person name="Deramo C."/>
            <person name="Delgado O."/>
            <person name="Dugan-Rocha S."/>
            <person name="Miner G."/>
            <person name="Morgan M."/>
            <person name="Hawes A."/>
            <person name="Gill R."/>
            <person name="Holt R.A."/>
            <person name="Adams M.D."/>
            <person name="Amanatides P.G."/>
            <person name="Baden-Tillson H."/>
            <person name="Barnstead M."/>
            <person name="Chin S."/>
            <person name="Evans C.A."/>
            <person name="Ferriera S."/>
            <person name="Fosler C."/>
            <person name="Glodek A."/>
            <person name="Gu Z."/>
            <person name="Jennings D."/>
            <person name="Kraft C.L."/>
            <person name="Nguyen T."/>
            <person name="Pfannkoch C.M."/>
            <person name="Sitter C."/>
            <person name="Sutton G.G."/>
            <person name="Venter J.C."/>
            <person name="Woodage T."/>
            <person name="Smith D."/>
            <person name="Lee H.-M."/>
            <person name="Gustafson E."/>
            <person name="Cahill P."/>
            <person name="Kana A."/>
            <person name="Doucette-Stamm L."/>
            <person name="Weinstock K."/>
            <person name="Fechtel K."/>
            <person name="Weiss R.B."/>
            <person name="Dunn D.M."/>
            <person name="Green E.D."/>
            <person name="Blakesley R.W."/>
            <person name="Bouffard G.G."/>
            <person name="De Jong P.J."/>
            <person name="Osoegawa K."/>
            <person name="Zhu B."/>
            <person name="Marra M."/>
            <person name="Schein J."/>
            <person name="Bosdet I."/>
            <person name="Fjell C."/>
            <person name="Jones S."/>
            <person name="Krzywinski M."/>
            <person name="Mathewson C."/>
            <person name="Siddiqui A."/>
            <person name="Wye N."/>
            <person name="McPherson J."/>
            <person name="Zhao S."/>
            <person name="Fraser C.M."/>
            <person name="Shetty J."/>
            <person name="Shatsman S."/>
            <person name="Geer K."/>
            <person name="Chen Y."/>
            <person name="Abramzon S."/>
            <person name="Nierman W.C."/>
            <person name="Havlak P.H."/>
            <person name="Chen R."/>
            <person name="Durbin K.J."/>
            <person name="Egan A."/>
            <person name="Ren Y."/>
            <person name="Song X.-Z."/>
            <person name="Li B."/>
            <person name="Liu Y."/>
            <person name="Qin X."/>
            <person name="Cawley S."/>
            <person name="Cooney A.J."/>
            <person name="D'Souza L.M."/>
            <person name="Martin K."/>
            <person name="Wu J.Q."/>
            <person name="Gonzalez-Garay M.L."/>
            <person name="Jackson A.R."/>
            <person name="Kalafus K.J."/>
            <person name="McLeod M.P."/>
            <person name="Milosavljevic A."/>
            <person name="Virk D."/>
            <person name="Volkov A."/>
            <person name="Wheeler D.A."/>
            <person name="Zhang Z."/>
            <person name="Bailey J.A."/>
            <person name="Eichler E.E."/>
            <person name="Tuzun E."/>
            <person name="Birney E."/>
            <person name="Mongin E."/>
            <person name="Ureta-Vidal A."/>
            <person name="Woodwark C."/>
            <person name="Zdobnov E."/>
            <person name="Bork P."/>
            <person name="Suyama M."/>
            <person name="Torrents D."/>
            <person name="Alexandersson M."/>
            <person name="Trask B.J."/>
            <person name="Young J.M."/>
            <person name="Huang H."/>
            <person name="Wang H."/>
            <person name="Xing H."/>
            <person name="Daniels S."/>
            <person name="Gietzen D."/>
            <person name="Schmidt J."/>
            <person name="Stevens K."/>
            <person name="Vitt U."/>
            <person name="Wingrove J."/>
            <person name="Camara F."/>
            <person name="Mar Alba M."/>
            <person name="Abril J.F."/>
            <person name="Guigo R."/>
            <person name="Smit A."/>
            <person name="Dubchak I."/>
            <person name="Rubin E.M."/>
            <person name="Couronne O."/>
            <person name="Poliakov A."/>
            <person name="Huebner N."/>
            <person name="Ganten D."/>
            <person name="Goesele C."/>
            <person name="Hummel O."/>
            <person name="Kreitler T."/>
            <person name="Lee Y.-A."/>
            <person name="Monti J."/>
            <person name="Schulz H."/>
            <person name="Zimdahl H."/>
            <person name="Himmelbauer H."/>
            <person name="Lehrach H."/>
            <person name="Jacob H.J."/>
            <person name="Bromberg S."/>
            <person name="Gullings-Handley J."/>
            <person name="Jensen-Seaman M.I."/>
            <person name="Kwitek A.E."/>
            <person name="Lazar J."/>
            <person name="Pasko D."/>
            <person name="Tonellato P.J."/>
            <person name="Twigger S."/>
            <person name="Ponting C.P."/>
            <person name="Duarte J.M."/>
            <person name="Rice S."/>
            <person name="Goodstadt L."/>
            <person name="Beatson S.A."/>
            <person name="Emes R.D."/>
            <person name="Winter E.E."/>
            <person name="Webber C."/>
            <person name="Brandt P."/>
            <person name="Nyakatura G."/>
            <person name="Adetobi M."/>
            <person name="Chiaromonte F."/>
            <person name="Elnitski L."/>
            <person name="Eswara P."/>
            <person name="Hardison R.C."/>
            <person name="Hou M."/>
            <person name="Kolbe D."/>
            <person name="Makova K."/>
            <person name="Miller W."/>
            <person name="Nekrutenko A."/>
            <person name="Riemer C."/>
            <person name="Schwartz S."/>
            <person name="Taylor J."/>
            <person name="Yang S."/>
            <person name="Zhang Y."/>
            <person name="Lindpaintner K."/>
            <person name="Andrews T.D."/>
            <person name="Caccamo M."/>
            <person name="Clamp M."/>
            <person name="Clarke L."/>
            <person name="Curwen V."/>
            <person name="Durbin R.M."/>
            <person name="Eyras E."/>
            <person name="Searle S.M."/>
            <person name="Cooper G.M."/>
            <person name="Batzoglou S."/>
            <person name="Brudno M."/>
            <person name="Sidow A."/>
            <person name="Stone E.A."/>
            <person name="Payseur B.A."/>
            <person name="Bourque G."/>
            <person name="Lopez-Otin C."/>
            <person name="Puente X.S."/>
            <person name="Chakrabarti K."/>
            <person name="Chatterji S."/>
            <person name="Dewey C."/>
            <person name="Pachter L."/>
            <person name="Bray N."/>
            <person name="Yap V.B."/>
            <person name="Caspi A."/>
            <person name="Tesler G."/>
            <person name="Pevzner P.A."/>
            <person name="Haussler D."/>
            <person name="Roskin K.M."/>
            <person name="Baertsch R."/>
            <person name="Clawson H."/>
            <person name="Furey T.S."/>
            <person name="Hinrichs A.S."/>
            <person name="Karolchik D."/>
            <person name="Kent W.J."/>
            <person name="Rosenbloom K.R."/>
            <person name="Trumbower H."/>
            <person name="Weirauch M."/>
            <person name="Cooper D.N."/>
            <person name="Stenson P.D."/>
            <person name="Ma B."/>
            <person name="Brent M."/>
            <person name="Arumugam M."/>
            <person name="Shteynberg D."/>
            <person name="Copley R.R."/>
            <person name="Taylor M.S."/>
            <person name="Riethman H."/>
            <person name="Mudunuri U."/>
            <person name="Peterson J."/>
            <person name="Guyer M."/>
            <person name="Felsenfeld A."/>
            <person name="Old S."/>
            <person name="Mockrin S."/>
            <person name="Collins F.S."/>
        </authorList>
    </citation>
    <scope>NUCLEOTIDE SEQUENCE [LARGE SCALE GENOMIC DNA]</scope>
    <source>
        <strain>Brown Norway</strain>
    </source>
</reference>
<reference key="2">
    <citation type="journal article" date="2004" name="Genome Res.">
        <title>The status, quality, and expansion of the NIH full-length cDNA project: the Mammalian Gene Collection (MGC).</title>
        <authorList>
            <consortium name="The MGC Project Team"/>
        </authorList>
    </citation>
    <scope>NUCLEOTIDE SEQUENCE [LARGE SCALE MRNA] (ISOFORM 2)</scope>
    <source>
        <tissue>Placenta</tissue>
    </source>
</reference>
<reference key="3">
    <citation type="journal article" date="2012" name="Nat. Commun.">
        <title>Quantitative maps of protein phosphorylation sites across 14 different rat organs and tissues.</title>
        <authorList>
            <person name="Lundby A."/>
            <person name="Secher A."/>
            <person name="Lage K."/>
            <person name="Nordsborg N.B."/>
            <person name="Dmytriyev A."/>
            <person name="Lundby C."/>
            <person name="Olsen J.V."/>
        </authorList>
    </citation>
    <scope>PHOSPHORYLATION [LARGE SCALE ANALYSIS] AT SER-64; SER-165 AND SER-177</scope>
    <scope>IDENTIFICATION BY MASS SPECTROMETRY [LARGE SCALE ANALYSIS]</scope>
</reference>
<dbReference type="EC" id="3.4.19.12" evidence="2"/>
<dbReference type="EMBL" id="AABR03119131">
    <property type="status" value="NOT_ANNOTATED_CDS"/>
    <property type="molecule type" value="Genomic_DNA"/>
</dbReference>
<dbReference type="EMBL" id="BC110054">
    <property type="protein sequence ID" value="AAI10055.1"/>
    <property type="molecule type" value="mRNA"/>
</dbReference>
<dbReference type="RefSeq" id="NP_001032585.1">
    <molecule id="Q2YDU3-2"/>
    <property type="nucleotide sequence ID" value="NM_001037496.1"/>
</dbReference>
<dbReference type="RefSeq" id="NP_001401659.1">
    <molecule id="Q2YDU3-1"/>
    <property type="nucleotide sequence ID" value="NM_001414730.1"/>
</dbReference>
<dbReference type="SMR" id="Q2YDU3"/>
<dbReference type="FunCoup" id="Q2YDU3">
    <property type="interactions" value="2367"/>
</dbReference>
<dbReference type="STRING" id="10116.ENSRNOP00000006233"/>
<dbReference type="MEROPS" id="C85.001"/>
<dbReference type="iPTMnet" id="Q2YDU3"/>
<dbReference type="PhosphoSitePlus" id="Q2YDU3"/>
<dbReference type="PaxDb" id="10116-ENSRNOP00000039455"/>
<dbReference type="GeneID" id="363452"/>
<dbReference type="UCSC" id="RGD:1563027">
    <molecule id="Q2YDU3-1"/>
    <property type="organism name" value="rat"/>
</dbReference>
<dbReference type="AGR" id="RGD:1563027"/>
<dbReference type="CTD" id="55593"/>
<dbReference type="RGD" id="1563027">
    <property type="gene designation" value="Otud5"/>
</dbReference>
<dbReference type="eggNOG" id="KOG2605">
    <property type="taxonomic scope" value="Eukaryota"/>
</dbReference>
<dbReference type="HOGENOM" id="CLU_021938_0_1_1"/>
<dbReference type="InParanoid" id="Q2YDU3"/>
<dbReference type="OrthoDB" id="409956at2759"/>
<dbReference type="PhylomeDB" id="Q2YDU3"/>
<dbReference type="PRO" id="PR:Q2YDU3"/>
<dbReference type="Proteomes" id="UP000002494">
    <property type="component" value="Unplaced"/>
</dbReference>
<dbReference type="GO" id="GO:0005634">
    <property type="term" value="C:nucleus"/>
    <property type="evidence" value="ECO:0000250"/>
    <property type="project" value="UniProtKB"/>
</dbReference>
<dbReference type="GO" id="GO:0004843">
    <property type="term" value="F:cysteine-type deubiquitinase activity"/>
    <property type="evidence" value="ECO:0000250"/>
    <property type="project" value="UniProtKB"/>
</dbReference>
<dbReference type="GO" id="GO:0101005">
    <property type="term" value="F:deubiquitinase activity"/>
    <property type="evidence" value="ECO:0000266"/>
    <property type="project" value="RGD"/>
</dbReference>
<dbReference type="GO" id="GO:1990380">
    <property type="term" value="F:K48-linked deubiquitinase activity"/>
    <property type="evidence" value="ECO:0000250"/>
    <property type="project" value="UniProtKB"/>
</dbReference>
<dbReference type="GO" id="GO:0061578">
    <property type="term" value="F:K63-linked deubiquitinase activity"/>
    <property type="evidence" value="ECO:0000250"/>
    <property type="project" value="UniProtKB"/>
</dbReference>
<dbReference type="GO" id="GO:0043374">
    <property type="term" value="P:CD8-positive, alpha-beta T cell differentiation"/>
    <property type="evidence" value="ECO:0000266"/>
    <property type="project" value="RGD"/>
</dbReference>
<dbReference type="GO" id="GO:0090090">
    <property type="term" value="P:negative regulation of canonical Wnt signaling pathway"/>
    <property type="evidence" value="ECO:0000266"/>
    <property type="project" value="RGD"/>
</dbReference>
<dbReference type="GO" id="GO:0032700">
    <property type="term" value="P:negative regulation of interleukin-17 production"/>
    <property type="evidence" value="ECO:0000266"/>
    <property type="project" value="RGD"/>
</dbReference>
<dbReference type="GO" id="GO:0014033">
    <property type="term" value="P:neural crest cell differentiation"/>
    <property type="evidence" value="ECO:0000250"/>
    <property type="project" value="UniProtKB"/>
</dbReference>
<dbReference type="GO" id="GO:1904263">
    <property type="term" value="P:positive regulation of TORC1 signaling"/>
    <property type="evidence" value="ECO:0000266"/>
    <property type="project" value="RGD"/>
</dbReference>
<dbReference type="GO" id="GO:1904515">
    <property type="term" value="P:positive regulation of TORC2 signaling"/>
    <property type="evidence" value="ECO:0000266"/>
    <property type="project" value="RGD"/>
</dbReference>
<dbReference type="GO" id="GO:0043161">
    <property type="term" value="P:proteasome-mediated ubiquitin-dependent protein catabolic process"/>
    <property type="evidence" value="ECO:0000266"/>
    <property type="project" value="RGD"/>
</dbReference>
<dbReference type="GO" id="GO:0016579">
    <property type="term" value="P:protein deubiquitination"/>
    <property type="evidence" value="ECO:0000266"/>
    <property type="project" value="RGD"/>
</dbReference>
<dbReference type="GO" id="GO:0071108">
    <property type="term" value="P:protein K48-linked deubiquitination"/>
    <property type="evidence" value="ECO:0000250"/>
    <property type="project" value="UniProtKB"/>
</dbReference>
<dbReference type="GO" id="GO:0070536">
    <property type="term" value="P:protein K63-linked deubiquitination"/>
    <property type="evidence" value="ECO:0000250"/>
    <property type="project" value="UniProtKB"/>
</dbReference>
<dbReference type="GO" id="GO:0050776">
    <property type="term" value="P:regulation of immune response"/>
    <property type="evidence" value="ECO:0000318"/>
    <property type="project" value="GO_Central"/>
</dbReference>
<dbReference type="GO" id="GO:0031647">
    <property type="term" value="P:regulation of protein stability"/>
    <property type="evidence" value="ECO:0000266"/>
    <property type="project" value="RGD"/>
</dbReference>
<dbReference type="GO" id="GO:2000316">
    <property type="term" value="P:regulation of T-helper 17 type immune response"/>
    <property type="evidence" value="ECO:0000266"/>
    <property type="project" value="RGD"/>
</dbReference>
<dbReference type="GO" id="GO:0032496">
    <property type="term" value="P:response to lipopolysaccharide"/>
    <property type="evidence" value="ECO:0000250"/>
    <property type="project" value="UniProtKB"/>
</dbReference>
<dbReference type="GO" id="GO:0072540">
    <property type="term" value="P:T-helper 17 cell lineage commitment"/>
    <property type="evidence" value="ECO:0000266"/>
    <property type="project" value="RGD"/>
</dbReference>
<dbReference type="CDD" id="cd22752">
    <property type="entry name" value="OTU_OTUD5-like"/>
    <property type="match status" value="1"/>
</dbReference>
<dbReference type="FunFam" id="3.90.70.80:FF:000002">
    <property type="entry name" value="OTU domain-containing protein 5 isoform X2"/>
    <property type="match status" value="1"/>
</dbReference>
<dbReference type="Gene3D" id="3.90.70.80">
    <property type="match status" value="1"/>
</dbReference>
<dbReference type="InterPro" id="IPR003323">
    <property type="entry name" value="OTU_dom"/>
</dbReference>
<dbReference type="InterPro" id="IPR038765">
    <property type="entry name" value="Papain-like_cys_pep_sf"/>
</dbReference>
<dbReference type="InterPro" id="IPR050704">
    <property type="entry name" value="Peptidase_C85-like"/>
</dbReference>
<dbReference type="PANTHER" id="PTHR12419">
    <property type="entry name" value="OTU DOMAIN CONTAINING PROTEIN"/>
    <property type="match status" value="1"/>
</dbReference>
<dbReference type="PANTHER" id="PTHR12419:SF4">
    <property type="entry name" value="OTU DOMAIN-CONTAINING PROTEIN 5"/>
    <property type="match status" value="1"/>
</dbReference>
<dbReference type="Pfam" id="PF02338">
    <property type="entry name" value="OTU"/>
    <property type="match status" value="1"/>
</dbReference>
<dbReference type="SUPFAM" id="SSF54001">
    <property type="entry name" value="Cysteine proteinases"/>
    <property type="match status" value="1"/>
</dbReference>
<dbReference type="PROSITE" id="PS50802">
    <property type="entry name" value="OTU"/>
    <property type="match status" value="1"/>
</dbReference>
<keyword id="KW-0025">Alternative splicing</keyword>
<keyword id="KW-0378">Hydrolase</keyword>
<keyword id="KW-0539">Nucleus</keyword>
<keyword id="KW-0597">Phosphoprotein</keyword>
<keyword id="KW-0645">Protease</keyword>
<keyword id="KW-1185">Reference proteome</keyword>
<keyword id="KW-0788">Thiol protease</keyword>
<keyword id="KW-0833">Ubl conjugation pathway</keyword>
<organism>
    <name type="scientific">Rattus norvegicus</name>
    <name type="common">Rat</name>
    <dbReference type="NCBI Taxonomy" id="10116"/>
    <lineage>
        <taxon>Eukaryota</taxon>
        <taxon>Metazoa</taxon>
        <taxon>Chordata</taxon>
        <taxon>Craniata</taxon>
        <taxon>Vertebrata</taxon>
        <taxon>Euteleostomi</taxon>
        <taxon>Mammalia</taxon>
        <taxon>Eutheria</taxon>
        <taxon>Euarchontoglires</taxon>
        <taxon>Glires</taxon>
        <taxon>Rodentia</taxon>
        <taxon>Myomorpha</taxon>
        <taxon>Muroidea</taxon>
        <taxon>Muridae</taxon>
        <taxon>Murinae</taxon>
        <taxon>Rattus</taxon>
    </lineage>
</organism>
<protein>
    <recommendedName>
        <fullName>OTU domain-containing protein 5</fullName>
        <ecNumber evidence="2">3.4.19.12</ecNumber>
    </recommendedName>
    <alternativeName>
        <fullName>Deubiquitinating enzyme A</fullName>
        <shortName>DUBA</shortName>
    </alternativeName>
</protein>
<name>OTUD5_RAT</name>
<gene>
    <name evidence="8" type="primary">Otud5</name>
</gene>
<comment type="function">
    <text evidence="2">Deubiquitinating enzyme that functions as a negative regulator of the innate immune system. Has peptidase activity towards 'Lys-48'- and 'Lys-63'-linked polyubiquitin chains. Can also cleave 'Lys-11'-linked ubiquitin chains (in vitro). Acts via TRAF3 deubiquitination and subsequent suppression of type I interferon (IFN) production. Controls neuroectodermal differentiation through cleaving 'Lys-48'-linked ubiquitin chains to counteract degradation of select chromatin regulators such as ARID1A, HDAC2 and HCF1. Acts as a positive regulator of mTORC1 and mTORC2 signaling following phosphorylation by MTOR: acts by mediating deubiquitination of BTRC, leading to its stability.</text>
</comment>
<comment type="catalytic activity">
    <reaction evidence="2">
        <text>Thiol-dependent hydrolysis of ester, thioester, amide, peptide and isopeptide bonds formed by the C-terminal Gly of ubiquitin (a 76-residue protein attached to proteins as an intracellular targeting signal).</text>
        <dbReference type="EC" id="3.4.19.12"/>
    </reaction>
</comment>
<comment type="activity regulation">
    <text evidence="2">Inhibited by N-ethyl-maleimide (NEM).</text>
</comment>
<comment type="subunit">
    <text evidence="2">Interacts with TRAF3.</text>
</comment>
<comment type="subcellular location">
    <subcellularLocation>
        <location evidence="2">Nucleus</location>
    </subcellularLocation>
</comment>
<comment type="alternative products">
    <event type="alternative splicing"/>
    <isoform>
        <id>Q2YDU3-1</id>
        <name>1</name>
        <sequence type="displayed"/>
    </isoform>
    <isoform>
        <id>Q2YDU3-2</id>
        <name>2</name>
        <sequence type="described" ref="VSP_023197"/>
    </isoform>
</comment>
<comment type="PTM">
    <text evidence="2">Phosphorylation at Ser-177 is required for deubiquitinating activity. Phosphorylation at Ser-323, Ser-332 and Ser-503 by MTOR promotes its activity.</text>
</comment>
<comment type="similarity">
    <text evidence="7">Belongs to the peptidase C85 family.</text>
</comment>
<sequence>MTILPKKKPPPPDADPANEPPPPGPLPPAPRRGGGVGVGGGGTGVGGGERDRDSGVVGARPRASPPPQGPLPGPPGALHRWALAVPPGAVAGPRPQQASPPPCGGPGGPGGGPGDALGATTAGVGAAGVVVGVGGPVGVGGCCSGPGHSKRRRQAPGVGAVGGASPEREEVGAGYNSEDEYEAAAARIEAMDPATVEQQEHWFEKALRDKKGFIIKQMKEDGACLFRAVADQVYGDQDMHEVVRKHCMDYLMKNADYFSNYVTEDFTTYINRKRKNNCHGNHIEMQAMAEMYNRPVEVYQYSTEPINTFHGIHQNEDEPIRVSYHRNIHYNSVVNPNKATIGVGLGLPSFKPGFAEQSLMKNAIKTSEESWIEQQMLEDKKRATDWEATNEAIEEQVARESYLQWLRDQEKQARQVRGPSQPRKASATCSSATAAASSGLEEWTSRSPRQRSSASSPEHPELHAELGIKPPSPGTVLALAKPPSPCAPGTSSQFSAGADRATSPLVSLYPALECRALIQQMSPSAFGLNDWDDDEILASVLAVSQQEYLDSMKKNKVHRDPPPDKS</sequence>
<feature type="chain" id="PRO_0000278225" description="OTU domain-containing protein 5">
    <location>
        <begin position="1"/>
        <end position="566"/>
    </location>
</feature>
<feature type="domain" description="OTU" evidence="4">
    <location>
        <begin position="213"/>
        <end position="336"/>
    </location>
</feature>
<feature type="region of interest" description="Disordered" evidence="5">
    <location>
        <begin position="1"/>
        <end position="117"/>
    </location>
</feature>
<feature type="region of interest" description="Disordered" evidence="5">
    <location>
        <begin position="146"/>
        <end position="175"/>
    </location>
</feature>
<feature type="region of interest" description="Cys-loop" evidence="1">
    <location>
        <begin position="218"/>
        <end position="224"/>
    </location>
</feature>
<feature type="region of interest" description="Variable-loop" evidence="1">
    <location>
        <begin position="273"/>
        <end position="283"/>
    </location>
</feature>
<feature type="region of interest" description="His-loop" evidence="1">
    <location>
        <begin position="324"/>
        <end position="329"/>
    </location>
</feature>
<feature type="region of interest" description="Disordered" evidence="5">
    <location>
        <begin position="413"/>
        <end position="497"/>
    </location>
</feature>
<feature type="compositionally biased region" description="Pro residues" evidence="5">
    <location>
        <begin position="11"/>
        <end position="30"/>
    </location>
</feature>
<feature type="compositionally biased region" description="Gly residues" evidence="5">
    <location>
        <begin position="32"/>
        <end position="47"/>
    </location>
</feature>
<feature type="compositionally biased region" description="Pro residues" evidence="5">
    <location>
        <begin position="63"/>
        <end position="75"/>
    </location>
</feature>
<feature type="compositionally biased region" description="Low complexity" evidence="5">
    <location>
        <begin position="84"/>
        <end position="97"/>
    </location>
</feature>
<feature type="compositionally biased region" description="Gly residues" evidence="5">
    <location>
        <begin position="105"/>
        <end position="115"/>
    </location>
</feature>
<feature type="compositionally biased region" description="Low complexity" evidence="5">
    <location>
        <begin position="425"/>
        <end position="438"/>
    </location>
</feature>
<feature type="compositionally biased region" description="Low complexity" evidence="5">
    <location>
        <begin position="445"/>
        <end position="457"/>
    </location>
</feature>
<feature type="active site" evidence="3">
    <location>
        <position position="221"/>
    </location>
</feature>
<feature type="active site" description="Nucleophile" evidence="2">
    <location>
        <position position="224"/>
    </location>
</feature>
<feature type="active site" evidence="2">
    <location>
        <position position="329"/>
    </location>
</feature>
<feature type="modified residue" description="Phosphoserine" evidence="9">
    <location>
        <position position="64"/>
    </location>
</feature>
<feature type="modified residue" description="Phosphoserine" evidence="9">
    <location>
        <position position="165"/>
    </location>
</feature>
<feature type="modified residue" description="Phosphotyrosine" evidence="2">
    <location>
        <position position="175"/>
    </location>
</feature>
<feature type="modified residue" description="Phosphoserine" evidence="9">
    <location>
        <position position="177"/>
    </location>
</feature>
<feature type="modified residue" description="Phosphothreonine" evidence="2">
    <location>
        <position position="195"/>
    </location>
</feature>
<feature type="modified residue" description="Phosphoserine" evidence="2">
    <location>
        <position position="323"/>
    </location>
</feature>
<feature type="modified residue" description="Phosphoserine" evidence="2">
    <location>
        <position position="332"/>
    </location>
</feature>
<feature type="modified residue" description="Phosphoserine" evidence="2">
    <location>
        <position position="370"/>
    </location>
</feature>
<feature type="modified residue" description="Phosphoserine" evidence="2">
    <location>
        <position position="447"/>
    </location>
</feature>
<feature type="modified residue" description="Phosphothreonine" evidence="2">
    <location>
        <position position="502"/>
    </location>
</feature>
<feature type="modified residue" description="Phosphoserine" evidence="2">
    <location>
        <position position="503"/>
    </location>
</feature>
<feature type="splice variant" id="VSP_023197" description="In isoform 2." evidence="6">
    <location>
        <begin position="118"/>
        <end position="160"/>
    </location>
</feature>